<name>NHAA_RHIWR</name>
<accession>A5V7M2</accession>
<reference key="1">
    <citation type="journal article" date="2010" name="J. Bacteriol.">
        <title>Genome sequence of the dioxin-mineralizing bacterium Sphingomonas wittichii RW1.</title>
        <authorList>
            <person name="Miller T.R."/>
            <person name="Delcher A.L."/>
            <person name="Salzberg S.L."/>
            <person name="Saunders E."/>
            <person name="Detter J.C."/>
            <person name="Halden R.U."/>
        </authorList>
    </citation>
    <scope>NUCLEOTIDE SEQUENCE [LARGE SCALE GENOMIC DNA]</scope>
    <source>
        <strain>DSM 6014 / CCUG 31198 / JCM 15750 / NBRC 105917 / EY 4224 / RW1</strain>
    </source>
</reference>
<keyword id="KW-0050">Antiport</keyword>
<keyword id="KW-0997">Cell inner membrane</keyword>
<keyword id="KW-1003">Cell membrane</keyword>
<keyword id="KW-0406">Ion transport</keyword>
<keyword id="KW-0472">Membrane</keyword>
<keyword id="KW-1185">Reference proteome</keyword>
<keyword id="KW-0915">Sodium</keyword>
<keyword id="KW-0739">Sodium transport</keyword>
<keyword id="KW-0812">Transmembrane</keyword>
<keyword id="KW-1133">Transmembrane helix</keyword>
<keyword id="KW-0813">Transport</keyword>
<gene>
    <name evidence="1" type="primary">nhaA</name>
    <name type="ordered locus">Swit_1928</name>
</gene>
<comment type="function">
    <text evidence="1">Na(+)/H(+) antiporter that extrudes sodium in exchange for external protons.</text>
</comment>
<comment type="catalytic activity">
    <reaction evidence="1">
        <text>Na(+)(in) + 2 H(+)(out) = Na(+)(out) + 2 H(+)(in)</text>
        <dbReference type="Rhea" id="RHEA:29251"/>
        <dbReference type="ChEBI" id="CHEBI:15378"/>
        <dbReference type="ChEBI" id="CHEBI:29101"/>
    </reaction>
    <physiologicalReaction direction="left-to-right" evidence="1">
        <dbReference type="Rhea" id="RHEA:29252"/>
    </physiologicalReaction>
</comment>
<comment type="subcellular location">
    <subcellularLocation>
        <location evidence="1">Cell inner membrane</location>
        <topology evidence="1">Multi-pass membrane protein</topology>
    </subcellularLocation>
</comment>
<comment type="similarity">
    <text evidence="1">Belongs to the NhaA Na(+)/H(+) (TC 2.A.33) antiporter family.</text>
</comment>
<protein>
    <recommendedName>
        <fullName evidence="1">Na(+)/H(+) antiporter NhaA</fullName>
    </recommendedName>
    <alternativeName>
        <fullName evidence="1">Sodium/proton antiporter NhaA</fullName>
    </alternativeName>
</protein>
<dbReference type="EMBL" id="CP000699">
    <property type="protein sequence ID" value="ABQ68288.1"/>
    <property type="molecule type" value="Genomic_DNA"/>
</dbReference>
<dbReference type="SMR" id="A5V7M2"/>
<dbReference type="STRING" id="392499.Swit_1928"/>
<dbReference type="PaxDb" id="392499-Swit_1928"/>
<dbReference type="KEGG" id="swi:Swit_1928"/>
<dbReference type="eggNOG" id="COG3004">
    <property type="taxonomic scope" value="Bacteria"/>
</dbReference>
<dbReference type="HOGENOM" id="CLU_015803_1_0_5"/>
<dbReference type="OrthoDB" id="9808135at2"/>
<dbReference type="Proteomes" id="UP000001989">
    <property type="component" value="Chromosome"/>
</dbReference>
<dbReference type="GO" id="GO:0005886">
    <property type="term" value="C:plasma membrane"/>
    <property type="evidence" value="ECO:0007669"/>
    <property type="project" value="UniProtKB-SubCell"/>
</dbReference>
<dbReference type="GO" id="GO:0015385">
    <property type="term" value="F:sodium:proton antiporter activity"/>
    <property type="evidence" value="ECO:0007669"/>
    <property type="project" value="TreeGrafter"/>
</dbReference>
<dbReference type="GO" id="GO:0006885">
    <property type="term" value="P:regulation of pH"/>
    <property type="evidence" value="ECO:0007669"/>
    <property type="project" value="InterPro"/>
</dbReference>
<dbReference type="Gene3D" id="1.20.1530.10">
    <property type="entry name" value="Na+/H+ antiporter like domain"/>
    <property type="match status" value="1"/>
</dbReference>
<dbReference type="HAMAP" id="MF_01844">
    <property type="entry name" value="NhaA"/>
    <property type="match status" value="1"/>
</dbReference>
<dbReference type="InterPro" id="IPR023171">
    <property type="entry name" value="Na/H_antiporter_dom_sf"/>
</dbReference>
<dbReference type="InterPro" id="IPR004670">
    <property type="entry name" value="NhaA"/>
</dbReference>
<dbReference type="NCBIfam" id="TIGR00773">
    <property type="entry name" value="NhaA"/>
    <property type="match status" value="1"/>
</dbReference>
<dbReference type="NCBIfam" id="NF007111">
    <property type="entry name" value="PRK09560.1"/>
    <property type="match status" value="1"/>
</dbReference>
<dbReference type="NCBIfam" id="NF007112">
    <property type="entry name" value="PRK09561.1"/>
    <property type="match status" value="1"/>
</dbReference>
<dbReference type="PANTHER" id="PTHR30341:SF0">
    <property type="entry name" value="NA(+)_H(+) ANTIPORTER NHAA"/>
    <property type="match status" value="1"/>
</dbReference>
<dbReference type="PANTHER" id="PTHR30341">
    <property type="entry name" value="SODIUM ION/PROTON ANTIPORTER NHAA-RELATED"/>
    <property type="match status" value="1"/>
</dbReference>
<dbReference type="Pfam" id="PF06965">
    <property type="entry name" value="Na_H_antiport_1"/>
    <property type="match status" value="1"/>
</dbReference>
<evidence type="ECO:0000255" key="1">
    <source>
        <dbReference type="HAMAP-Rule" id="MF_01844"/>
    </source>
</evidence>
<feature type="chain" id="PRO_0000334443" description="Na(+)/H(+) antiporter NhaA">
    <location>
        <begin position="1"/>
        <end position="376"/>
    </location>
</feature>
<feature type="transmembrane region" description="Helical" evidence="1">
    <location>
        <begin position="8"/>
        <end position="28"/>
    </location>
</feature>
<feature type="transmembrane region" description="Helical" evidence="1">
    <location>
        <begin position="49"/>
        <end position="69"/>
    </location>
</feature>
<feature type="transmembrane region" description="Helical" evidence="1">
    <location>
        <begin position="87"/>
        <end position="107"/>
    </location>
</feature>
<feature type="transmembrane region" description="Helical" evidence="1">
    <location>
        <begin position="117"/>
        <end position="137"/>
    </location>
</feature>
<feature type="transmembrane region" description="Helical" evidence="1">
    <location>
        <begin position="140"/>
        <end position="160"/>
    </location>
</feature>
<feature type="transmembrane region" description="Helical" evidence="1">
    <location>
        <begin position="162"/>
        <end position="182"/>
    </location>
</feature>
<feature type="transmembrane region" description="Helical" evidence="1">
    <location>
        <begin position="209"/>
        <end position="229"/>
    </location>
</feature>
<feature type="transmembrane region" description="Helical" evidence="1">
    <location>
        <begin position="248"/>
        <end position="268"/>
    </location>
</feature>
<feature type="transmembrane region" description="Helical" evidence="1">
    <location>
        <begin position="270"/>
        <end position="290"/>
    </location>
</feature>
<feature type="transmembrane region" description="Helical" evidence="1">
    <location>
        <begin position="321"/>
        <end position="341"/>
    </location>
</feature>
<feature type="transmembrane region" description="Helical" evidence="1">
    <location>
        <begin position="349"/>
        <end position="369"/>
    </location>
</feature>
<sequence>MRMLFRSFLATEAAGGIILIAAAAAAMLVANSPLAPTYFELLHARLGPLSLLHWINDALMALFFLLVGLEIKREFLRGHLARWSDRILPCIAAAAGMAAPALLYLAFAGGTEGLVRGWAIPTATDIAFAIGVLALLGSRAPASLKLFLTTIAIVDDMGAVAIIALAYTAAISGPALLAAIVILAAMAGLGRIGVRRLWPYLLLAAALWLAVLLSGVHATIAGVLAALAIPLGDEDDSPLERLEHGLHPWVAFAIVPLFGFANAGVSFAEIGAEQLLAPLPLGIAAGLFLGKQAGIFGSVRLAVALGLAQRPAGASWTQLYGVALLCGIGFTMSLFIGGLAFSDPLLIDEVKIGVLGGSILSAIAGYALLRWTGKVT</sequence>
<organism>
    <name type="scientific">Rhizorhabdus wittichii (strain DSM 6014 / CCUG 31198 / JCM 15750 / NBRC 105917 / EY 4224 / RW1)</name>
    <name type="common">Sphingomonas wittichii</name>
    <dbReference type="NCBI Taxonomy" id="392499"/>
    <lineage>
        <taxon>Bacteria</taxon>
        <taxon>Pseudomonadati</taxon>
        <taxon>Pseudomonadota</taxon>
        <taxon>Alphaproteobacteria</taxon>
        <taxon>Sphingomonadales</taxon>
        <taxon>Sphingomonadaceae</taxon>
        <taxon>Rhizorhabdus</taxon>
    </lineage>
</organism>
<proteinExistence type="inferred from homology"/>